<comment type="function">
    <text evidence="4">Transcription factor (PubMed:23172916). Binds to the iroquois binding site (IBS) motif of target genes to regulate gene expression; functions as a transcriptional activator or repressor (PubMed:23172916). Modulates expression of RCVRN, VSX1, BHLHE22/BHLHB5 and TACR3/Nk3r (PubMed:23172916). Required downstream of retinal bipolar cell specification for the terminal differentiation of type 2, type 3a and possibly type 6 bipolar cells (PubMed:23172916).</text>
</comment>
<comment type="subcellular location">
    <subcellularLocation>
        <location evidence="1">Nucleus</location>
    </subcellularLocation>
</comment>
<comment type="tissue specificity">
    <text evidence="4">Expressed in a subset of retinal ganglion cells and bipolar cells; including in type 2 and type 3a bipolar cells.</text>
</comment>
<comment type="developmental stage">
    <text evidence="3 4">Expressed in heart, neural tube, limb buds and developing eye (PubMed:11335133). Earliest expression at embryonic 10.5 dpc in the heart, restricted to the endocardium that lines the atrial and ventricular myocardium (PubMed:11335133). Expressed in neural tube at 11.5-12.5 dpc, especially in the ventral regions, most likely in the motor neurons (PubMed:11335133). Expressed in fore and hindlimbs at 10.5-13.5 dpc (PubMed:11335133). Also expressed in area lining the lumen of the otic vesicle at 12 dpc and in the mammary gland primordium at 13.5 dpc (PubMed:11335133). Expressed in the marginal zone of the neural layer, and the central ganglion cell region, of the retina at 13.5 dpc (PubMed:11335133, PubMed:23172916). By 16.5 dpc, expressed in the developing retinal ganglion cell layer and optic nerve region; at postnatal day zero (P0), expression persists in the ganglion cell layer, and in the apical margin region of the retina (PubMed:23172916). By P7, expressed in a number of cells within the outer half of the inner nuclear layer and in the ganglion cell layer (PubMed:23172916). Transiently expressed in newly born photoreceptor cells at P0, but not in adult photoreceptor cells (PubMed:23172916).</text>
</comment>
<comment type="similarity">
    <text evidence="5">Belongs to the TALE/IRO homeobox family.</text>
</comment>
<organism>
    <name type="scientific">Mus musculus</name>
    <name type="common">Mouse</name>
    <dbReference type="NCBI Taxonomy" id="10090"/>
    <lineage>
        <taxon>Eukaryota</taxon>
        <taxon>Metazoa</taxon>
        <taxon>Chordata</taxon>
        <taxon>Craniata</taxon>
        <taxon>Vertebrata</taxon>
        <taxon>Euteleostomi</taxon>
        <taxon>Mammalia</taxon>
        <taxon>Eutheria</taxon>
        <taxon>Euarchontoglires</taxon>
        <taxon>Glires</taxon>
        <taxon>Rodentia</taxon>
        <taxon>Myomorpha</taxon>
        <taxon>Muroidea</taxon>
        <taxon>Muridae</taxon>
        <taxon>Murinae</taxon>
        <taxon>Mus</taxon>
        <taxon>Mus</taxon>
    </lineage>
</organism>
<dbReference type="EMBL" id="AJ271055">
    <property type="protein sequence ID" value="CAC10403.1"/>
    <property type="molecule type" value="mRNA"/>
</dbReference>
<dbReference type="EMBL" id="AC134337">
    <property type="status" value="NOT_ANNOTATED_CDS"/>
    <property type="molecule type" value="Genomic_DNA"/>
</dbReference>
<dbReference type="EMBL" id="BC130029">
    <property type="protein sequence ID" value="AAI30030.1"/>
    <property type="molecule type" value="mRNA"/>
</dbReference>
<dbReference type="CCDS" id="CCDS80913.1"/>
<dbReference type="RefSeq" id="NP_001288066.1">
    <property type="nucleotide sequence ID" value="NM_001301137.1"/>
</dbReference>
<dbReference type="SMR" id="Q9ER75"/>
<dbReference type="BioGRID" id="211066">
    <property type="interactions" value="3"/>
</dbReference>
<dbReference type="FunCoup" id="Q9ER75">
    <property type="interactions" value="830"/>
</dbReference>
<dbReference type="IntAct" id="Q9ER75">
    <property type="interactions" value="1"/>
</dbReference>
<dbReference type="STRING" id="10090.ENSMUSP00000034185"/>
<dbReference type="GlyGen" id="Q9ER75">
    <property type="glycosylation" value="2 sites, 1 O-linked glycan (1 site)"/>
</dbReference>
<dbReference type="PhosphoSitePlus" id="Q9ER75"/>
<dbReference type="PaxDb" id="10090-ENSMUSP00000034185"/>
<dbReference type="ProteomicsDB" id="301673"/>
<dbReference type="Antibodypedia" id="14626">
    <property type="antibodies" value="170 antibodies from 18 providers"/>
</dbReference>
<dbReference type="DNASU" id="64379"/>
<dbReference type="Ensembl" id="ENSMUST00000167261.3">
    <property type="protein sequence ID" value="ENSMUSP00000127446.2"/>
    <property type="gene ID" value="ENSMUSG00000031738.15"/>
</dbReference>
<dbReference type="GeneID" id="64379"/>
<dbReference type="KEGG" id="mmu:64379"/>
<dbReference type="UCSC" id="uc009muc.2">
    <property type="organism name" value="mouse"/>
</dbReference>
<dbReference type="AGR" id="MGI:1927642"/>
<dbReference type="CTD" id="79190"/>
<dbReference type="MGI" id="MGI:1927642">
    <property type="gene designation" value="Irx6"/>
</dbReference>
<dbReference type="VEuPathDB" id="HostDB:ENSMUSG00000031738"/>
<dbReference type="eggNOG" id="KOG0773">
    <property type="taxonomic scope" value="Eukaryota"/>
</dbReference>
<dbReference type="GeneTree" id="ENSGT00940000159909"/>
<dbReference type="HOGENOM" id="CLU_042927_1_0_1"/>
<dbReference type="InParanoid" id="Q9ER75"/>
<dbReference type="OrthoDB" id="5399138at2759"/>
<dbReference type="BioGRID-ORCS" id="64379">
    <property type="hits" value="5 hits in 77 CRISPR screens"/>
</dbReference>
<dbReference type="PRO" id="PR:Q9ER75"/>
<dbReference type="Proteomes" id="UP000000589">
    <property type="component" value="Chromosome 8"/>
</dbReference>
<dbReference type="RNAct" id="Q9ER75">
    <property type="molecule type" value="protein"/>
</dbReference>
<dbReference type="Bgee" id="ENSMUSG00000031738">
    <property type="expression patterns" value="Expressed in endocardium of ventricle and 40 other cell types or tissues"/>
</dbReference>
<dbReference type="ExpressionAtlas" id="Q9ER75">
    <property type="expression patterns" value="baseline and differential"/>
</dbReference>
<dbReference type="GO" id="GO:0005634">
    <property type="term" value="C:nucleus"/>
    <property type="evidence" value="ECO:0007669"/>
    <property type="project" value="UniProtKB-SubCell"/>
</dbReference>
<dbReference type="GO" id="GO:0003677">
    <property type="term" value="F:DNA binding"/>
    <property type="evidence" value="ECO:0007669"/>
    <property type="project" value="UniProtKB-KW"/>
</dbReference>
<dbReference type="GO" id="GO:0001228">
    <property type="term" value="F:DNA-binding transcription activator activity, RNA polymerase II-specific"/>
    <property type="evidence" value="ECO:0000314"/>
    <property type="project" value="MGI"/>
</dbReference>
<dbReference type="GO" id="GO:0001227">
    <property type="term" value="F:DNA-binding transcription repressor activity, RNA polymerase II-specific"/>
    <property type="evidence" value="ECO:0000314"/>
    <property type="project" value="MGI"/>
</dbReference>
<dbReference type="GO" id="GO:0009584">
    <property type="term" value="P:detection of visible light"/>
    <property type="evidence" value="ECO:0000315"/>
    <property type="project" value="MGI"/>
</dbReference>
<dbReference type="GO" id="GO:0045892">
    <property type="term" value="P:negative regulation of DNA-templated transcription"/>
    <property type="evidence" value="ECO:0000314"/>
    <property type="project" value="MGI"/>
</dbReference>
<dbReference type="GO" id="GO:0045893">
    <property type="term" value="P:positive regulation of DNA-templated transcription"/>
    <property type="evidence" value="ECO:0000314"/>
    <property type="project" value="MGI"/>
</dbReference>
<dbReference type="GO" id="GO:0010842">
    <property type="term" value="P:retina layer formation"/>
    <property type="evidence" value="ECO:0000315"/>
    <property type="project" value="MGI"/>
</dbReference>
<dbReference type="GO" id="GO:0060040">
    <property type="term" value="P:retinal bipolar neuron differentiation"/>
    <property type="evidence" value="ECO:0000315"/>
    <property type="project" value="MGI"/>
</dbReference>
<dbReference type="CDD" id="cd00086">
    <property type="entry name" value="homeodomain"/>
    <property type="match status" value="1"/>
</dbReference>
<dbReference type="FunFam" id="1.10.10.60:FF:000003">
    <property type="entry name" value="Iroquois-class homeobox protein IRX"/>
    <property type="match status" value="1"/>
</dbReference>
<dbReference type="Gene3D" id="1.10.10.60">
    <property type="entry name" value="Homeodomain-like"/>
    <property type="match status" value="1"/>
</dbReference>
<dbReference type="InterPro" id="IPR001356">
    <property type="entry name" value="HD"/>
</dbReference>
<dbReference type="InterPro" id="IPR017970">
    <property type="entry name" value="Homeobox_CS"/>
</dbReference>
<dbReference type="InterPro" id="IPR009057">
    <property type="entry name" value="Homeodomain-like_sf"/>
</dbReference>
<dbReference type="InterPro" id="IPR003893">
    <property type="entry name" value="Iroquois_homeo"/>
</dbReference>
<dbReference type="InterPro" id="IPR008422">
    <property type="entry name" value="KN_HD"/>
</dbReference>
<dbReference type="PANTHER" id="PTHR11211">
    <property type="entry name" value="IROQUOIS-CLASS HOMEODOMAIN PROTEIN IRX"/>
    <property type="match status" value="1"/>
</dbReference>
<dbReference type="PANTHER" id="PTHR11211:SF11">
    <property type="entry name" value="IROQUOIS-CLASS HOMEODOMAIN PROTEIN IRX-6"/>
    <property type="match status" value="1"/>
</dbReference>
<dbReference type="Pfam" id="PF05920">
    <property type="entry name" value="Homeobox_KN"/>
    <property type="match status" value="1"/>
</dbReference>
<dbReference type="SMART" id="SM00389">
    <property type="entry name" value="HOX"/>
    <property type="match status" value="1"/>
</dbReference>
<dbReference type="SMART" id="SM00548">
    <property type="entry name" value="IRO"/>
    <property type="match status" value="1"/>
</dbReference>
<dbReference type="SUPFAM" id="SSF46689">
    <property type="entry name" value="Homeodomain-like"/>
    <property type="match status" value="1"/>
</dbReference>
<dbReference type="PROSITE" id="PS00027">
    <property type="entry name" value="HOMEOBOX_1"/>
    <property type="match status" value="1"/>
</dbReference>
<dbReference type="PROSITE" id="PS50071">
    <property type="entry name" value="HOMEOBOX_2"/>
    <property type="match status" value="1"/>
</dbReference>
<accession>Q9ER75</accession>
<accession>A1L3D2</accession>
<accession>E9Q2V2</accession>
<evidence type="ECO:0000255" key="1">
    <source>
        <dbReference type="PROSITE-ProRule" id="PRU00108"/>
    </source>
</evidence>
<evidence type="ECO:0000256" key="2">
    <source>
        <dbReference type="SAM" id="MobiDB-lite"/>
    </source>
</evidence>
<evidence type="ECO:0000269" key="3">
    <source>
    </source>
</evidence>
<evidence type="ECO:0000269" key="4">
    <source>
    </source>
</evidence>
<evidence type="ECO:0000305" key="5"/>
<name>IRX6_MOUSE</name>
<sequence length="438" mass="47352">MAFSPFGHPYGSTSQFLVSASSSATCCETAPRPVSDVASASTSASTLCCTPYDSRLLGSARPELGAALGIYGAPYAAAQSYPGYLTYGPEPPTLCGALNPQYEFKDAAGSFAPSLTQPGAYYPYETTLGQYQYDRYGGVELSSAGRRKNATRESTSALKAWLHEHRKNPYPTKGEKIMLAIITKMTLTQVSTWFANARRRLKKENKMTWAPKNKGGEERKADSGEDSLGCLNGDTKDATASQEARGLRLSDLEDLEEEEEEEEAEEEAAVSAARRLADFQKSTQPLPAPCAAAQERCLESRECGLGLPRFSFTEAPQSGEADFITAEPGGPTMILHYPSGHKPRIWSLAHTAAASAVESAPSTPPRAQSPECHMIPRQPSSIRRLLVPRDSEGEEDSPAAKAFGNSTFTLQGLPLNCAPYPRRREPEVRFQYPSGAEG</sequence>
<proteinExistence type="evidence at transcript level"/>
<protein>
    <recommendedName>
        <fullName>Iroquois-class homeodomain protein IRX-6</fullName>
    </recommendedName>
    <alternativeName>
        <fullName>Homeodomain protein IRXB3</fullName>
    </alternativeName>
    <alternativeName>
        <fullName>Iroquois homeobox protein 6</fullName>
    </alternativeName>
</protein>
<keyword id="KW-0238">DNA-binding</keyword>
<keyword id="KW-0371">Homeobox</keyword>
<keyword id="KW-0539">Nucleus</keyword>
<keyword id="KW-1185">Reference proteome</keyword>
<gene>
    <name type="primary">Irx6</name>
    <name type="synonym">Irxb3</name>
</gene>
<reference key="1">
    <citation type="journal article" date="2000" name="Genome Res.">
        <title>Organization of mouse Iroquois homeobox genes in two clusters suggests a conserved regulation and function in vertebrate development.</title>
        <authorList>
            <person name="Peters T."/>
            <person name="Dildrop R."/>
            <person name="Ausmeier K."/>
            <person name="Ruether U."/>
        </authorList>
    </citation>
    <scope>NUCLEOTIDE SEQUENCE [MRNA]</scope>
    <source>
        <strain>NIH Swiss</strain>
        <tissue>Heart</tissue>
    </source>
</reference>
<reference key="2">
    <citation type="journal article" date="2009" name="PLoS Biol.">
        <title>Lineage-specific biology revealed by a finished genome assembly of the mouse.</title>
        <authorList>
            <person name="Church D.M."/>
            <person name="Goodstadt L."/>
            <person name="Hillier L.W."/>
            <person name="Zody M.C."/>
            <person name="Goldstein S."/>
            <person name="She X."/>
            <person name="Bult C.J."/>
            <person name="Agarwala R."/>
            <person name="Cherry J.L."/>
            <person name="DiCuccio M."/>
            <person name="Hlavina W."/>
            <person name="Kapustin Y."/>
            <person name="Meric P."/>
            <person name="Maglott D."/>
            <person name="Birtle Z."/>
            <person name="Marques A.C."/>
            <person name="Graves T."/>
            <person name="Zhou S."/>
            <person name="Teague B."/>
            <person name="Potamousis K."/>
            <person name="Churas C."/>
            <person name="Place M."/>
            <person name="Herschleb J."/>
            <person name="Runnheim R."/>
            <person name="Forrest D."/>
            <person name="Amos-Landgraf J."/>
            <person name="Schwartz D.C."/>
            <person name="Cheng Z."/>
            <person name="Lindblad-Toh K."/>
            <person name="Eichler E.E."/>
            <person name="Ponting C.P."/>
        </authorList>
    </citation>
    <scope>NUCLEOTIDE SEQUENCE [LARGE SCALE GENOMIC DNA]</scope>
    <source>
        <strain>C57BL/6J</strain>
    </source>
</reference>
<reference key="3">
    <citation type="journal article" date="2004" name="Genome Res.">
        <title>The status, quality, and expansion of the NIH full-length cDNA project: the Mammalian Gene Collection (MGC).</title>
        <authorList>
            <consortium name="The MGC Project Team"/>
        </authorList>
    </citation>
    <scope>NUCLEOTIDE SEQUENCE [LARGE SCALE MRNA]</scope>
</reference>
<reference key="4">
    <citation type="journal article" date="2001" name="Mech. Dev.">
        <title>Expression of Irx6 during mouse morphogenesis.</title>
        <authorList>
            <person name="Mummenhoff J."/>
            <person name="Houweling A.C."/>
            <person name="Peters T."/>
            <person name="Christoffels V.M."/>
            <person name="Ruether U."/>
        </authorList>
    </citation>
    <scope>DEVELOPMENTAL STAGE</scope>
</reference>
<reference key="5">
    <citation type="journal article" date="2012" name="Development">
        <title>Regulation of retinal interneuron subtype identity by the Iroquois homeobox gene Irx6.</title>
        <authorList>
            <person name="Star E.N."/>
            <person name="Zhu M."/>
            <person name="Shi Z."/>
            <person name="Liu H."/>
            <person name="Pashmforoush M."/>
            <person name="Sauve Y."/>
            <person name="Bruneau B.G."/>
            <person name="Chow R.L."/>
        </authorList>
    </citation>
    <scope>FUNCTION</scope>
    <scope>DEVELOPMENTAL STAGE</scope>
    <scope>TISSUE SPECIFICITY</scope>
</reference>
<feature type="chain" id="PRO_0000049163" description="Iroquois-class homeodomain protein IRX-6">
    <location>
        <begin position="1"/>
        <end position="438"/>
    </location>
</feature>
<feature type="DNA-binding region" description="Homeobox" evidence="1">
    <location>
        <begin position="143"/>
        <end position="205"/>
    </location>
</feature>
<feature type="region of interest" description="Disordered" evidence="2">
    <location>
        <begin position="205"/>
        <end position="270"/>
    </location>
</feature>
<feature type="region of interest" description="Disordered" evidence="2">
    <location>
        <begin position="388"/>
        <end position="438"/>
    </location>
</feature>
<feature type="compositionally biased region" description="Basic and acidic residues" evidence="2">
    <location>
        <begin position="214"/>
        <end position="223"/>
    </location>
</feature>
<feature type="compositionally biased region" description="Acidic residues" evidence="2">
    <location>
        <begin position="252"/>
        <end position="268"/>
    </location>
</feature>
<feature type="sequence conflict" description="In Ref. 1; CAC10403 and 3; AAI30030." evidence="5" ref="1 3">
    <original>P</original>
    <variation>S</variation>
    <location>
        <position position="33"/>
    </location>
</feature>
<feature type="sequence conflict" description="In Ref. 1; CAC10403 and 3; AAI30030." evidence="5" ref="1 3">
    <original>R</original>
    <variation>G</variation>
    <location>
        <position position="296"/>
    </location>
</feature>